<sequence length="480" mass="54759">MVRVRFAPSPTGPLHIGGARSALFNYLFARKNNGVFIVRIEDTDLERSSRESEKNILESLKWLGITWDEGIEVGGENGPYRQTERLDLYQKYAQKLIEEGFAYYCFCTEEELEEERKNLLAKGEMPRYLGKCRNLTPEQKEKYLAEGRKPTVRFKVPAGRTIVINDLVRGVVSFETDGIGDFIIVKSDGIPTYNFAVVIDDVTMGITHVLRGEEHLSNTPRQILIYEALGFKIPEFAHISLILGKDRTKMSKRHGATSVENYREKGYLPEALVNFLALLGWSPGTEEEIFTMEQLIERFSLDRVAKNPAIFDLDKLNWINGYYIRNSELSRIVELSLPFFQSCGYVSQNPTEEEMRKLTKVVEATREYVVTLSELPEHAAIFYQKELAFEEEAKTLLADEEARNILRKVADKLREIPGSEEEEIKGFLKKLPKELGVGGKKVYMPLRAALTGKTHGPELYQVIAILGPAEAERRIMNLFN</sequence>
<comment type="function">
    <text evidence="1">Catalyzes the attachment of glutamate to tRNA(Glu) in a two-step reaction: glutamate is first activated by ATP to form Glu-AMP and then transferred to the acceptor end of tRNA(Glu).</text>
</comment>
<comment type="catalytic activity">
    <reaction evidence="1">
        <text>tRNA(Glu) + L-glutamate + ATP = L-glutamyl-tRNA(Glu) + AMP + diphosphate</text>
        <dbReference type="Rhea" id="RHEA:23540"/>
        <dbReference type="Rhea" id="RHEA-COMP:9663"/>
        <dbReference type="Rhea" id="RHEA-COMP:9680"/>
        <dbReference type="ChEBI" id="CHEBI:29985"/>
        <dbReference type="ChEBI" id="CHEBI:30616"/>
        <dbReference type="ChEBI" id="CHEBI:33019"/>
        <dbReference type="ChEBI" id="CHEBI:78442"/>
        <dbReference type="ChEBI" id="CHEBI:78520"/>
        <dbReference type="ChEBI" id="CHEBI:456215"/>
        <dbReference type="EC" id="6.1.1.17"/>
    </reaction>
</comment>
<comment type="subunit">
    <text evidence="1">Monomer.</text>
</comment>
<comment type="subcellular location">
    <subcellularLocation>
        <location evidence="1">Cytoplasm</location>
    </subcellularLocation>
</comment>
<comment type="similarity">
    <text evidence="1">Belongs to the class-I aminoacyl-tRNA synthetase family. Glutamate--tRNA ligase type 1 subfamily.</text>
</comment>
<evidence type="ECO:0000255" key="1">
    <source>
        <dbReference type="HAMAP-Rule" id="MF_00022"/>
    </source>
</evidence>
<feature type="chain" id="PRO_0000237350" description="Glutamate--tRNA ligase">
    <location>
        <begin position="1"/>
        <end position="480"/>
    </location>
</feature>
<feature type="short sequence motif" description="'HIGH' region" evidence="1">
    <location>
        <begin position="8"/>
        <end position="18"/>
    </location>
</feature>
<feature type="short sequence motif" description="'KMSKS' region" evidence="1">
    <location>
        <begin position="249"/>
        <end position="253"/>
    </location>
</feature>
<feature type="binding site" evidence="1">
    <location>
        <position position="252"/>
    </location>
    <ligand>
        <name>ATP</name>
        <dbReference type="ChEBI" id="CHEBI:30616"/>
    </ligand>
</feature>
<protein>
    <recommendedName>
        <fullName evidence="1">Glutamate--tRNA ligase</fullName>
        <ecNumber evidence="1">6.1.1.17</ecNumber>
    </recommendedName>
    <alternativeName>
        <fullName evidence="1">Glutamyl-tRNA synthetase</fullName>
        <shortName evidence="1">GluRS</shortName>
    </alternativeName>
</protein>
<name>SYE_CARHZ</name>
<keyword id="KW-0030">Aminoacyl-tRNA synthetase</keyword>
<keyword id="KW-0067">ATP-binding</keyword>
<keyword id="KW-0963">Cytoplasm</keyword>
<keyword id="KW-0436">Ligase</keyword>
<keyword id="KW-0547">Nucleotide-binding</keyword>
<keyword id="KW-0648">Protein biosynthesis</keyword>
<keyword id="KW-1185">Reference proteome</keyword>
<organism>
    <name type="scientific">Carboxydothermus hydrogenoformans (strain ATCC BAA-161 / DSM 6008 / Z-2901)</name>
    <dbReference type="NCBI Taxonomy" id="246194"/>
    <lineage>
        <taxon>Bacteria</taxon>
        <taxon>Bacillati</taxon>
        <taxon>Bacillota</taxon>
        <taxon>Clostridia</taxon>
        <taxon>Thermoanaerobacterales</taxon>
        <taxon>Thermoanaerobacteraceae</taxon>
        <taxon>Carboxydothermus</taxon>
    </lineage>
</organism>
<reference key="1">
    <citation type="journal article" date="2005" name="PLoS Genet.">
        <title>Life in hot carbon monoxide: the complete genome sequence of Carboxydothermus hydrogenoformans Z-2901.</title>
        <authorList>
            <person name="Wu M."/>
            <person name="Ren Q."/>
            <person name="Durkin A.S."/>
            <person name="Daugherty S.C."/>
            <person name="Brinkac L.M."/>
            <person name="Dodson R.J."/>
            <person name="Madupu R."/>
            <person name="Sullivan S.A."/>
            <person name="Kolonay J.F."/>
            <person name="Nelson W.C."/>
            <person name="Tallon L.J."/>
            <person name="Jones K.M."/>
            <person name="Ulrich L.E."/>
            <person name="Gonzalez J.M."/>
            <person name="Zhulin I.B."/>
            <person name="Robb F.T."/>
            <person name="Eisen J.A."/>
        </authorList>
    </citation>
    <scope>NUCLEOTIDE SEQUENCE [LARGE SCALE GENOMIC DNA]</scope>
    <source>
        <strain>ATCC BAA-161 / DSM 6008 / Z-2901</strain>
    </source>
</reference>
<dbReference type="EC" id="6.1.1.17" evidence="1"/>
<dbReference type="EMBL" id="CP000141">
    <property type="protein sequence ID" value="ABB13998.1"/>
    <property type="molecule type" value="Genomic_DNA"/>
</dbReference>
<dbReference type="RefSeq" id="WP_011345218.1">
    <property type="nucleotide sequence ID" value="NC_007503.1"/>
</dbReference>
<dbReference type="SMR" id="Q3A9N9"/>
<dbReference type="FunCoup" id="Q3A9N9">
    <property type="interactions" value="461"/>
</dbReference>
<dbReference type="STRING" id="246194.CHY_2340"/>
<dbReference type="KEGG" id="chy:CHY_2340"/>
<dbReference type="eggNOG" id="COG0008">
    <property type="taxonomic scope" value="Bacteria"/>
</dbReference>
<dbReference type="HOGENOM" id="CLU_015768_6_3_9"/>
<dbReference type="InParanoid" id="Q3A9N9"/>
<dbReference type="OrthoDB" id="9807503at2"/>
<dbReference type="Proteomes" id="UP000002706">
    <property type="component" value="Chromosome"/>
</dbReference>
<dbReference type="GO" id="GO:0005829">
    <property type="term" value="C:cytosol"/>
    <property type="evidence" value="ECO:0007669"/>
    <property type="project" value="TreeGrafter"/>
</dbReference>
<dbReference type="GO" id="GO:0005524">
    <property type="term" value="F:ATP binding"/>
    <property type="evidence" value="ECO:0007669"/>
    <property type="project" value="UniProtKB-UniRule"/>
</dbReference>
<dbReference type="GO" id="GO:0004818">
    <property type="term" value="F:glutamate-tRNA ligase activity"/>
    <property type="evidence" value="ECO:0007669"/>
    <property type="project" value="UniProtKB-UniRule"/>
</dbReference>
<dbReference type="GO" id="GO:0000049">
    <property type="term" value="F:tRNA binding"/>
    <property type="evidence" value="ECO:0007669"/>
    <property type="project" value="InterPro"/>
</dbReference>
<dbReference type="GO" id="GO:0008270">
    <property type="term" value="F:zinc ion binding"/>
    <property type="evidence" value="ECO:0007669"/>
    <property type="project" value="InterPro"/>
</dbReference>
<dbReference type="GO" id="GO:0006424">
    <property type="term" value="P:glutamyl-tRNA aminoacylation"/>
    <property type="evidence" value="ECO:0007669"/>
    <property type="project" value="UniProtKB-UniRule"/>
</dbReference>
<dbReference type="CDD" id="cd00808">
    <property type="entry name" value="GluRS_core"/>
    <property type="match status" value="1"/>
</dbReference>
<dbReference type="FunFam" id="3.40.50.620:FF:000045">
    <property type="entry name" value="Glutamate--tRNA ligase, mitochondrial"/>
    <property type="match status" value="1"/>
</dbReference>
<dbReference type="Gene3D" id="1.10.10.350">
    <property type="match status" value="1"/>
</dbReference>
<dbReference type="Gene3D" id="1.10.8.70">
    <property type="entry name" value="Glutamate-tRNA synthetase, class I, anticodon-binding domain 1"/>
    <property type="match status" value="1"/>
</dbReference>
<dbReference type="Gene3D" id="3.40.50.620">
    <property type="entry name" value="HUPs"/>
    <property type="match status" value="1"/>
</dbReference>
<dbReference type="HAMAP" id="MF_00022">
    <property type="entry name" value="Glu_tRNA_synth_type1"/>
    <property type="match status" value="1"/>
</dbReference>
<dbReference type="InterPro" id="IPR045462">
    <property type="entry name" value="aa-tRNA-synth_I_cd-bd"/>
</dbReference>
<dbReference type="InterPro" id="IPR020751">
    <property type="entry name" value="aa-tRNA-synth_I_codon-bd_sub2"/>
</dbReference>
<dbReference type="InterPro" id="IPR001412">
    <property type="entry name" value="aa-tRNA-synth_I_CS"/>
</dbReference>
<dbReference type="InterPro" id="IPR008925">
    <property type="entry name" value="aa_tRNA-synth_I_cd-bd_sf"/>
</dbReference>
<dbReference type="InterPro" id="IPR004527">
    <property type="entry name" value="Glu-tRNA-ligase_bac/mito"/>
</dbReference>
<dbReference type="InterPro" id="IPR020752">
    <property type="entry name" value="Glu-tRNA-synth_I_codon-bd_sub1"/>
</dbReference>
<dbReference type="InterPro" id="IPR000924">
    <property type="entry name" value="Glu/Gln-tRNA-synth"/>
</dbReference>
<dbReference type="InterPro" id="IPR020058">
    <property type="entry name" value="Glu/Gln-tRNA-synth_Ib_cat-dom"/>
</dbReference>
<dbReference type="InterPro" id="IPR049940">
    <property type="entry name" value="GluQ/Sye"/>
</dbReference>
<dbReference type="InterPro" id="IPR033910">
    <property type="entry name" value="GluRS_core"/>
</dbReference>
<dbReference type="InterPro" id="IPR014729">
    <property type="entry name" value="Rossmann-like_a/b/a_fold"/>
</dbReference>
<dbReference type="NCBIfam" id="TIGR00464">
    <property type="entry name" value="gltX_bact"/>
    <property type="match status" value="1"/>
</dbReference>
<dbReference type="PANTHER" id="PTHR43311">
    <property type="entry name" value="GLUTAMATE--TRNA LIGASE"/>
    <property type="match status" value="1"/>
</dbReference>
<dbReference type="PANTHER" id="PTHR43311:SF2">
    <property type="entry name" value="GLUTAMATE--TRNA LIGASE, MITOCHONDRIAL-RELATED"/>
    <property type="match status" value="1"/>
</dbReference>
<dbReference type="Pfam" id="PF19269">
    <property type="entry name" value="Anticodon_2"/>
    <property type="match status" value="1"/>
</dbReference>
<dbReference type="Pfam" id="PF00749">
    <property type="entry name" value="tRNA-synt_1c"/>
    <property type="match status" value="1"/>
</dbReference>
<dbReference type="PRINTS" id="PR00987">
    <property type="entry name" value="TRNASYNTHGLU"/>
</dbReference>
<dbReference type="SUPFAM" id="SSF48163">
    <property type="entry name" value="An anticodon-binding domain of class I aminoacyl-tRNA synthetases"/>
    <property type="match status" value="1"/>
</dbReference>
<dbReference type="SUPFAM" id="SSF52374">
    <property type="entry name" value="Nucleotidylyl transferase"/>
    <property type="match status" value="1"/>
</dbReference>
<dbReference type="PROSITE" id="PS00178">
    <property type="entry name" value="AA_TRNA_LIGASE_I"/>
    <property type="match status" value="1"/>
</dbReference>
<accession>Q3A9N9</accession>
<proteinExistence type="inferred from homology"/>
<gene>
    <name evidence="1" type="primary">gltX</name>
    <name type="ordered locus">CHY_2340</name>
</gene>